<sequence>MKYELQKTDGRARRGRLVFERGVVETPAFMPVGTYGTVKGMTPEEVKETGAQILLGNTFHLWLRPGQEIMKLHGDLHDFMQWHGPILTDSGGFQVFSLGAMRKIKEEGVHFKNPINGDSVFLSPEKSMEIQYDLGSDIVMIFDECTPYPADWDYAKRSMEMSLRWAARSRQRFDELNNKNALFGIIQGGVYEDLRDVSVKGLVDIGFDGYAVGGLAVGEPKEDMHRILEHVCPQIPEDKPRYLMGVGKPEDLVEGVRRGIDMFDCVMPTRNARNGHLFVTDGVVKIRNAKHKDDTATLDEHCDCYTCRHYSRAYLHHLDRCNEILGARLNTIHNLRYYQRLMAGLRQAIEEGKLEHFVEDFYGRIGKPVPPLNV</sequence>
<gene>
    <name evidence="1" type="primary">tgt</name>
    <name type="ordered locus">YPTB0928</name>
</gene>
<proteinExistence type="inferred from homology"/>
<evidence type="ECO:0000255" key="1">
    <source>
        <dbReference type="HAMAP-Rule" id="MF_00168"/>
    </source>
</evidence>
<accession>Q66DW5</accession>
<comment type="function">
    <text evidence="1">Catalyzes the base-exchange of a guanine (G) residue with the queuine precursor 7-aminomethyl-7-deazaguanine (PreQ1) at position 34 (anticodon wobble position) in tRNAs with GU(N) anticodons (tRNA-Asp, -Asn, -His and -Tyr). Catalysis occurs through a double-displacement mechanism. The nucleophile active site attacks the C1' of nucleotide 34 to detach the guanine base from the RNA, forming a covalent enzyme-RNA intermediate. The proton acceptor active site deprotonates the incoming PreQ1, allowing a nucleophilic attack on the C1' of the ribose to form the product. After dissociation, two additional enzymatic reactions on the tRNA convert PreQ1 to queuine (Q), resulting in the hypermodified nucleoside queuosine (7-(((4,5-cis-dihydroxy-2-cyclopenten-1-yl)amino)methyl)-7-deazaguanosine).</text>
</comment>
<comment type="catalytic activity">
    <reaction evidence="1">
        <text>7-aminomethyl-7-carbaguanine + guanosine(34) in tRNA = 7-aminomethyl-7-carbaguanosine(34) in tRNA + guanine</text>
        <dbReference type="Rhea" id="RHEA:24104"/>
        <dbReference type="Rhea" id="RHEA-COMP:10341"/>
        <dbReference type="Rhea" id="RHEA-COMP:10342"/>
        <dbReference type="ChEBI" id="CHEBI:16235"/>
        <dbReference type="ChEBI" id="CHEBI:58703"/>
        <dbReference type="ChEBI" id="CHEBI:74269"/>
        <dbReference type="ChEBI" id="CHEBI:82833"/>
        <dbReference type="EC" id="2.4.2.29"/>
    </reaction>
</comment>
<comment type="cofactor">
    <cofactor evidence="1">
        <name>Zn(2+)</name>
        <dbReference type="ChEBI" id="CHEBI:29105"/>
    </cofactor>
    <text evidence="1">Binds 1 zinc ion per subunit.</text>
</comment>
<comment type="pathway">
    <text evidence="1">tRNA modification; tRNA-queuosine biosynthesis.</text>
</comment>
<comment type="subunit">
    <text evidence="1">Homodimer. Within each dimer, one monomer is responsible for RNA recognition and catalysis, while the other monomer binds to the replacement base PreQ1.</text>
</comment>
<comment type="similarity">
    <text evidence="1">Belongs to the queuine tRNA-ribosyltransferase family.</text>
</comment>
<keyword id="KW-0328">Glycosyltransferase</keyword>
<keyword id="KW-0479">Metal-binding</keyword>
<keyword id="KW-0671">Queuosine biosynthesis</keyword>
<keyword id="KW-0808">Transferase</keyword>
<keyword id="KW-0819">tRNA processing</keyword>
<keyword id="KW-0862">Zinc</keyword>
<organism>
    <name type="scientific">Yersinia pseudotuberculosis serotype I (strain IP32953)</name>
    <dbReference type="NCBI Taxonomy" id="273123"/>
    <lineage>
        <taxon>Bacteria</taxon>
        <taxon>Pseudomonadati</taxon>
        <taxon>Pseudomonadota</taxon>
        <taxon>Gammaproteobacteria</taxon>
        <taxon>Enterobacterales</taxon>
        <taxon>Yersiniaceae</taxon>
        <taxon>Yersinia</taxon>
    </lineage>
</organism>
<protein>
    <recommendedName>
        <fullName evidence="1">Queuine tRNA-ribosyltransferase</fullName>
        <ecNumber evidence="1">2.4.2.29</ecNumber>
    </recommendedName>
    <alternativeName>
        <fullName evidence="1">Guanine insertion enzyme</fullName>
    </alternativeName>
    <alternativeName>
        <fullName evidence="1">tRNA-guanine transglycosylase</fullName>
    </alternativeName>
</protein>
<reference key="1">
    <citation type="journal article" date="2004" name="Proc. Natl. Acad. Sci. U.S.A.">
        <title>Insights into the evolution of Yersinia pestis through whole-genome comparison with Yersinia pseudotuberculosis.</title>
        <authorList>
            <person name="Chain P.S.G."/>
            <person name="Carniel E."/>
            <person name="Larimer F.W."/>
            <person name="Lamerdin J."/>
            <person name="Stoutland P.O."/>
            <person name="Regala W.M."/>
            <person name="Georgescu A.M."/>
            <person name="Vergez L.M."/>
            <person name="Land M.L."/>
            <person name="Motin V.L."/>
            <person name="Brubaker R.R."/>
            <person name="Fowler J."/>
            <person name="Hinnebusch J."/>
            <person name="Marceau M."/>
            <person name="Medigue C."/>
            <person name="Simonet M."/>
            <person name="Chenal-Francisque V."/>
            <person name="Souza B."/>
            <person name="Dacheux D."/>
            <person name="Elliott J.M."/>
            <person name="Derbise A."/>
            <person name="Hauser L.J."/>
            <person name="Garcia E."/>
        </authorList>
    </citation>
    <scope>NUCLEOTIDE SEQUENCE [LARGE SCALE GENOMIC DNA]</scope>
    <source>
        <strain>IP32953</strain>
    </source>
</reference>
<name>TGT_YERPS</name>
<feature type="chain" id="PRO_0000135562" description="Queuine tRNA-ribosyltransferase">
    <location>
        <begin position="1"/>
        <end position="374"/>
    </location>
</feature>
<feature type="region of interest" description="RNA binding" evidence="1">
    <location>
        <begin position="245"/>
        <end position="251"/>
    </location>
</feature>
<feature type="region of interest" description="RNA binding; important for wobble base 34 recognition" evidence="1">
    <location>
        <begin position="269"/>
        <end position="273"/>
    </location>
</feature>
<feature type="active site" description="Proton acceptor" evidence="1">
    <location>
        <position position="89"/>
    </location>
</feature>
<feature type="active site" description="Nucleophile" evidence="1">
    <location>
        <position position="264"/>
    </location>
</feature>
<feature type="binding site" evidence="1">
    <location>
        <begin position="89"/>
        <end position="93"/>
    </location>
    <ligand>
        <name>substrate</name>
    </ligand>
</feature>
<feature type="binding site" evidence="1">
    <location>
        <position position="143"/>
    </location>
    <ligand>
        <name>substrate</name>
    </ligand>
</feature>
<feature type="binding site" evidence="1">
    <location>
        <position position="187"/>
    </location>
    <ligand>
        <name>substrate</name>
    </ligand>
</feature>
<feature type="binding site" evidence="1">
    <location>
        <position position="214"/>
    </location>
    <ligand>
        <name>substrate</name>
    </ligand>
</feature>
<feature type="binding site" evidence="1">
    <location>
        <position position="302"/>
    </location>
    <ligand>
        <name>Zn(2+)</name>
        <dbReference type="ChEBI" id="CHEBI:29105"/>
    </ligand>
</feature>
<feature type="binding site" evidence="1">
    <location>
        <position position="304"/>
    </location>
    <ligand>
        <name>Zn(2+)</name>
        <dbReference type="ChEBI" id="CHEBI:29105"/>
    </ligand>
</feature>
<feature type="binding site" evidence="1">
    <location>
        <position position="307"/>
    </location>
    <ligand>
        <name>Zn(2+)</name>
        <dbReference type="ChEBI" id="CHEBI:29105"/>
    </ligand>
</feature>
<feature type="binding site" evidence="1">
    <location>
        <position position="333"/>
    </location>
    <ligand>
        <name>Zn(2+)</name>
        <dbReference type="ChEBI" id="CHEBI:29105"/>
    </ligand>
</feature>
<dbReference type="EC" id="2.4.2.29" evidence="1"/>
<dbReference type="EMBL" id="BX936398">
    <property type="protein sequence ID" value="CAH20168.1"/>
    <property type="molecule type" value="Genomic_DNA"/>
</dbReference>
<dbReference type="RefSeq" id="WP_002208672.1">
    <property type="nucleotide sequence ID" value="NZ_CP009712.1"/>
</dbReference>
<dbReference type="SMR" id="Q66DW5"/>
<dbReference type="GeneID" id="57975522"/>
<dbReference type="KEGG" id="ypo:BZ17_1618"/>
<dbReference type="KEGG" id="yps:YPTB0928"/>
<dbReference type="PATRIC" id="fig|273123.14.peg.1716"/>
<dbReference type="UniPathway" id="UPA00392"/>
<dbReference type="Proteomes" id="UP000001011">
    <property type="component" value="Chromosome"/>
</dbReference>
<dbReference type="GO" id="GO:0005829">
    <property type="term" value="C:cytosol"/>
    <property type="evidence" value="ECO:0007669"/>
    <property type="project" value="TreeGrafter"/>
</dbReference>
<dbReference type="GO" id="GO:0046872">
    <property type="term" value="F:metal ion binding"/>
    <property type="evidence" value="ECO:0007669"/>
    <property type="project" value="UniProtKB-KW"/>
</dbReference>
<dbReference type="GO" id="GO:0008479">
    <property type="term" value="F:tRNA-guanosine(34) queuine transglycosylase activity"/>
    <property type="evidence" value="ECO:0007669"/>
    <property type="project" value="UniProtKB-UniRule"/>
</dbReference>
<dbReference type="GO" id="GO:0008616">
    <property type="term" value="P:queuosine biosynthetic process"/>
    <property type="evidence" value="ECO:0007669"/>
    <property type="project" value="UniProtKB-UniRule"/>
</dbReference>
<dbReference type="GO" id="GO:0002099">
    <property type="term" value="P:tRNA wobble guanine modification"/>
    <property type="evidence" value="ECO:0007669"/>
    <property type="project" value="TreeGrafter"/>
</dbReference>
<dbReference type="GO" id="GO:0101030">
    <property type="term" value="P:tRNA-guanine transglycosylation"/>
    <property type="evidence" value="ECO:0007669"/>
    <property type="project" value="InterPro"/>
</dbReference>
<dbReference type="FunFam" id="3.20.20.105:FF:000001">
    <property type="entry name" value="Queuine tRNA-ribosyltransferase"/>
    <property type="match status" value="1"/>
</dbReference>
<dbReference type="Gene3D" id="3.20.20.105">
    <property type="entry name" value="Queuine tRNA-ribosyltransferase-like"/>
    <property type="match status" value="1"/>
</dbReference>
<dbReference type="HAMAP" id="MF_00168">
    <property type="entry name" value="Q_tRNA_Tgt"/>
    <property type="match status" value="1"/>
</dbReference>
<dbReference type="InterPro" id="IPR050076">
    <property type="entry name" value="ArchSynthase1/Queuine_TRR"/>
</dbReference>
<dbReference type="InterPro" id="IPR004803">
    <property type="entry name" value="TGT"/>
</dbReference>
<dbReference type="InterPro" id="IPR036511">
    <property type="entry name" value="TGT-like_sf"/>
</dbReference>
<dbReference type="InterPro" id="IPR002616">
    <property type="entry name" value="tRNA_ribo_trans-like"/>
</dbReference>
<dbReference type="NCBIfam" id="TIGR00430">
    <property type="entry name" value="Q_tRNA_tgt"/>
    <property type="match status" value="1"/>
</dbReference>
<dbReference type="NCBIfam" id="TIGR00449">
    <property type="entry name" value="tgt_general"/>
    <property type="match status" value="1"/>
</dbReference>
<dbReference type="PANTHER" id="PTHR46499">
    <property type="entry name" value="QUEUINE TRNA-RIBOSYLTRANSFERASE"/>
    <property type="match status" value="1"/>
</dbReference>
<dbReference type="PANTHER" id="PTHR46499:SF1">
    <property type="entry name" value="QUEUINE TRNA-RIBOSYLTRANSFERASE"/>
    <property type="match status" value="1"/>
</dbReference>
<dbReference type="Pfam" id="PF01702">
    <property type="entry name" value="TGT"/>
    <property type="match status" value="1"/>
</dbReference>
<dbReference type="SUPFAM" id="SSF51713">
    <property type="entry name" value="tRNA-guanine transglycosylase"/>
    <property type="match status" value="1"/>
</dbReference>